<gene>
    <name type="primary">dpcd</name>
    <name type="ORF">zgc:153412</name>
</gene>
<proteinExistence type="evidence at transcript level"/>
<reference key="1">
    <citation type="submission" date="2006-08" db="EMBL/GenBank/DDBJ databases">
        <authorList>
            <consortium name="NIH - Zebrafish Gene Collection (ZGC) project"/>
        </authorList>
    </citation>
    <scope>NUCLEOTIDE SEQUENCE [LARGE SCALE MRNA]</scope>
    <source>
        <tissue>Larval eye</tissue>
    </source>
</reference>
<accession>Q0P448</accession>
<evidence type="ECO:0000305" key="1"/>
<comment type="similarity">
    <text evidence="1">Belongs to the DPCD family.</text>
</comment>
<sequence>MAVQQWADALKKAKKTALISDGKRKVHYQFEDGNEMAEEYDLKTDELVMRKWRHKTTFGGQGQWTLEVGETNPTGATSDLIKENSSNPLFMRRDTKTSFQWRIRNISYPLEVYSVTAEPMERCCVIRTSNKKYYKKFSIPDLERCQLPLESTALSFTHANNTLIISYKKPKEILTLEQELLGELKKLKGTSEGDIDCKTQ</sequence>
<feature type="chain" id="PRO_0000323726" description="Protein DPCD">
    <location>
        <begin position="1"/>
        <end position="200"/>
    </location>
</feature>
<keyword id="KW-1185">Reference proteome</keyword>
<dbReference type="EMBL" id="BC122278">
    <property type="protein sequence ID" value="AAI22279.1"/>
    <property type="molecule type" value="mRNA"/>
</dbReference>
<dbReference type="RefSeq" id="NP_001038842.1">
    <property type="nucleotide sequence ID" value="NM_001045377.1"/>
</dbReference>
<dbReference type="FunCoup" id="Q0P448">
    <property type="interactions" value="509"/>
</dbReference>
<dbReference type="STRING" id="7955.ENSDARP00000079744"/>
<dbReference type="PaxDb" id="7955-ENSDARP00000079744"/>
<dbReference type="Ensembl" id="ENSDART00000085309">
    <property type="protein sequence ID" value="ENSDARP00000079744"/>
    <property type="gene ID" value="ENSDARG00000060501"/>
</dbReference>
<dbReference type="GeneID" id="751660"/>
<dbReference type="KEGG" id="dre:751660"/>
<dbReference type="AGR" id="ZFIN:ZDB-GENE-060825-166"/>
<dbReference type="CTD" id="25911"/>
<dbReference type="ZFIN" id="ZDB-GENE-060825-166">
    <property type="gene designation" value="dpcd"/>
</dbReference>
<dbReference type="eggNOG" id="ENOG502QUNA">
    <property type="taxonomic scope" value="Eukaryota"/>
</dbReference>
<dbReference type="HOGENOM" id="CLU_097313_0_0_1"/>
<dbReference type="InParanoid" id="Q0P448"/>
<dbReference type="OMA" id="PILCEME"/>
<dbReference type="OrthoDB" id="10256139at2759"/>
<dbReference type="PhylomeDB" id="Q0P448"/>
<dbReference type="TreeFam" id="TF324098"/>
<dbReference type="PRO" id="PR:Q0P448"/>
<dbReference type="Proteomes" id="UP000000437">
    <property type="component" value="Chromosome 1"/>
</dbReference>
<dbReference type="Bgee" id="ENSDARG00000060501">
    <property type="expression patterns" value="Expressed in testis and 20 other cell types or tissues"/>
</dbReference>
<dbReference type="ExpressionAtlas" id="Q0P448">
    <property type="expression patterns" value="baseline"/>
</dbReference>
<dbReference type="InterPro" id="IPR026224">
    <property type="entry name" value="DPCD"/>
</dbReference>
<dbReference type="PANTHER" id="PTHR31921">
    <property type="entry name" value="PROTEIN DPCD"/>
    <property type="match status" value="1"/>
</dbReference>
<dbReference type="PANTHER" id="PTHR31921:SF1">
    <property type="entry name" value="PROTEIN DPCD"/>
    <property type="match status" value="1"/>
</dbReference>
<dbReference type="Pfam" id="PF14913">
    <property type="entry name" value="DPCD"/>
    <property type="match status" value="1"/>
</dbReference>
<dbReference type="PRINTS" id="PR02065">
    <property type="entry name" value="PROTEINDPCD"/>
</dbReference>
<organism>
    <name type="scientific">Danio rerio</name>
    <name type="common">Zebrafish</name>
    <name type="synonym">Brachydanio rerio</name>
    <dbReference type="NCBI Taxonomy" id="7955"/>
    <lineage>
        <taxon>Eukaryota</taxon>
        <taxon>Metazoa</taxon>
        <taxon>Chordata</taxon>
        <taxon>Craniata</taxon>
        <taxon>Vertebrata</taxon>
        <taxon>Euteleostomi</taxon>
        <taxon>Actinopterygii</taxon>
        <taxon>Neopterygii</taxon>
        <taxon>Teleostei</taxon>
        <taxon>Ostariophysi</taxon>
        <taxon>Cypriniformes</taxon>
        <taxon>Danionidae</taxon>
        <taxon>Danioninae</taxon>
        <taxon>Danio</taxon>
    </lineage>
</organism>
<protein>
    <recommendedName>
        <fullName>Protein DPCD</fullName>
    </recommendedName>
</protein>
<name>DPCD_DANRE</name>